<proteinExistence type="evidence at transcript level"/>
<organism>
    <name type="scientific">Picosynechococcus sp. (strain ATCC 27264 / PCC 7002 / PR-6)</name>
    <name type="common">Agmenellum quadruplicatum</name>
    <dbReference type="NCBI Taxonomy" id="32049"/>
    <lineage>
        <taxon>Bacteria</taxon>
        <taxon>Bacillati</taxon>
        <taxon>Cyanobacteriota</taxon>
        <taxon>Cyanophyceae</taxon>
        <taxon>Oscillatoriophycideae</taxon>
        <taxon>Chroococcales</taxon>
        <taxon>Geminocystaceae</taxon>
        <taxon>Picosynechococcus</taxon>
    </lineage>
</organism>
<sequence>MKSSLVILYHREPYDEVRENGKTFYRDKTSPNGIMPTLKSFFANAEQSTWVAWKQISGKQQENFQAKMAFPGQENSVVHRIPLSADQVKNFYHITSKEAFWPILHSFPWQFTYDSSDWENFKQINEMFAEAACEDADDDALFWVHDYNLWLTPYFIRQKKPNAKIAFFHHTPFPSVDIFNILPWREAIVDSLLCCDLCGFHLPRYVQNFVAVARSLRKVEITRQVPVDEHAFTAVGTALAEPEITTQLKYKDHLVNLDAFPVGTNPTQIRAQVEKASTQERIRKIREELGSNKLILSAGRVDYVKGTKEMLVCYERLLERRPELQTKVNLVVAAAKAASGMRVYKNAQSEIERLVGRINGRFAKLNWTPILLFTSALSYEELLGFFGAADIAWITPLRDGLNLVAKEYVVAHGCDDGVLILSEFAGSAVELPDAILTNPYAAKRMDESIDQALAMPVEEQQRRMKSMYQAIQRYDVQQWANHMFREAKATAVLGKEPTPV</sequence>
<gene>
    <name type="primary">ggpS</name>
    <name type="ordered locus">SYNPCC7002_A2851</name>
</gene>
<accession>O65979</accession>
<accession>B1XNA9</accession>
<reference key="1">
    <citation type="journal article" date="1999" name="Appl. Environ. Microbiol.">
        <title>Expression of the ggpS gene, involved in osmolyte synthesis in the marine cyanobacterium synechococcus sp. strain PCC 7002, revealed regulatory differences between this strain and the freshwater strain synechocystis sp. strain PCC 6803.</title>
        <authorList>
            <person name="Engelbrecht F."/>
            <person name="Marin K."/>
            <person name="Hagemann M."/>
        </authorList>
    </citation>
    <scope>NUCLEOTIDE SEQUENCE [GENOMIC DNA]</scope>
</reference>
<reference key="2">
    <citation type="submission" date="2008-02" db="EMBL/GenBank/DDBJ databases">
        <title>Complete sequence of Synechococcus sp. PCC 7002.</title>
        <authorList>
            <person name="Li T."/>
            <person name="Zhao J."/>
            <person name="Zhao C."/>
            <person name="Liu Z."/>
            <person name="Zhao F."/>
            <person name="Marquardt J."/>
            <person name="Nomura C.T."/>
            <person name="Persson S."/>
            <person name="Detter J.C."/>
            <person name="Richardson P.M."/>
            <person name="Lanz C."/>
            <person name="Schuster S.C."/>
            <person name="Wang J."/>
            <person name="Li S."/>
            <person name="Huang X."/>
            <person name="Cai T."/>
            <person name="Yu Z."/>
            <person name="Luo J."/>
            <person name="Zhao J."/>
            <person name="Bryant D.A."/>
        </authorList>
    </citation>
    <scope>NUCLEOTIDE SEQUENCE [LARGE SCALE GENOMIC DNA]</scope>
    <source>
        <strain>ATCC 27264 / PCC 7002 / PR-6</strain>
    </source>
</reference>
<dbReference type="EC" id="2.4.1.213"/>
<dbReference type="EMBL" id="AJ006298">
    <property type="protein sequence ID" value="CAA06963.1"/>
    <property type="molecule type" value="Genomic_DNA"/>
</dbReference>
<dbReference type="EMBL" id="CP000951">
    <property type="protein sequence ID" value="ACB00819.1"/>
    <property type="molecule type" value="Genomic_DNA"/>
</dbReference>
<dbReference type="RefSeq" id="WP_012308437.1">
    <property type="nucleotide sequence ID" value="NZ_JAHHPU010000011.1"/>
</dbReference>
<dbReference type="SMR" id="O65979"/>
<dbReference type="STRING" id="32049.SYNPCC7002_A2851"/>
<dbReference type="CAZy" id="GT20">
    <property type="family name" value="Glycosyltransferase Family 20"/>
</dbReference>
<dbReference type="KEGG" id="syp:SYNPCC7002_A2851"/>
<dbReference type="eggNOG" id="COG0380">
    <property type="taxonomic scope" value="Bacteria"/>
</dbReference>
<dbReference type="HOGENOM" id="CLU_002351_7_1_3"/>
<dbReference type="UniPathway" id="UPA00795"/>
<dbReference type="Proteomes" id="UP000001688">
    <property type="component" value="Chromosome"/>
</dbReference>
<dbReference type="GO" id="GO:0003825">
    <property type="term" value="F:alpha,alpha-trehalose-phosphate synthase (UDP-forming) activity"/>
    <property type="evidence" value="ECO:0007669"/>
    <property type="project" value="TreeGrafter"/>
</dbReference>
<dbReference type="GO" id="GO:0033828">
    <property type="term" value="F:glucosylglycerol-phosphate synthase activity"/>
    <property type="evidence" value="ECO:0007669"/>
    <property type="project" value="UniProtKB-EC"/>
</dbReference>
<dbReference type="GO" id="GO:0051473">
    <property type="term" value="P:glucosylglycerol biosynthetic process"/>
    <property type="evidence" value="ECO:0007669"/>
    <property type="project" value="UniProtKB-UniPathway"/>
</dbReference>
<dbReference type="GO" id="GO:0005992">
    <property type="term" value="P:trehalose biosynthetic process"/>
    <property type="evidence" value="ECO:0007669"/>
    <property type="project" value="InterPro"/>
</dbReference>
<dbReference type="CDD" id="cd03788">
    <property type="entry name" value="GT20_TPS"/>
    <property type="match status" value="1"/>
</dbReference>
<dbReference type="FunFam" id="3.40.50.2000:FF:000010">
    <property type="entry name" value="Alpha,alpha-trehalose-phosphate synthase"/>
    <property type="match status" value="1"/>
</dbReference>
<dbReference type="Gene3D" id="3.40.50.2000">
    <property type="entry name" value="Glycogen Phosphorylase B"/>
    <property type="match status" value="2"/>
</dbReference>
<dbReference type="InterPro" id="IPR012764">
    <property type="entry name" value="Gluc_glyc_Psyn"/>
</dbReference>
<dbReference type="InterPro" id="IPR001830">
    <property type="entry name" value="Glyco_trans_20"/>
</dbReference>
<dbReference type="NCBIfam" id="TIGR02398">
    <property type="entry name" value="gluc_glyc_Psyn"/>
    <property type="match status" value="1"/>
</dbReference>
<dbReference type="PANTHER" id="PTHR10788:SF106">
    <property type="entry name" value="BCDNA.GH08860"/>
    <property type="match status" value="1"/>
</dbReference>
<dbReference type="PANTHER" id="PTHR10788">
    <property type="entry name" value="TREHALOSE-6-PHOSPHATE SYNTHASE"/>
    <property type="match status" value="1"/>
</dbReference>
<dbReference type="Pfam" id="PF00982">
    <property type="entry name" value="Glyco_transf_20"/>
    <property type="match status" value="1"/>
</dbReference>
<dbReference type="SUPFAM" id="SSF53756">
    <property type="entry name" value="UDP-Glycosyltransferase/glycogen phosphorylase"/>
    <property type="match status" value="1"/>
</dbReference>
<comment type="function">
    <text evidence="1">Involved in salt tolerance by producing GG-phosphate from ADP-glucose and glycerol-3-phosphate (G3P), an intermediate in the synthesis of the osmolyte glucosylglycerol (GG).</text>
</comment>
<comment type="catalytic activity">
    <reaction evidence="1">
        <text>ADP-alpha-D-glucose + sn-glycerol 3-phosphate = 2-O-(alpha-D-glucopyranosyl)-sn-glycerol 3-phosphate + ADP + H(+)</text>
        <dbReference type="Rhea" id="RHEA:12881"/>
        <dbReference type="ChEBI" id="CHEBI:15378"/>
        <dbReference type="ChEBI" id="CHEBI:57498"/>
        <dbReference type="ChEBI" id="CHEBI:57597"/>
        <dbReference type="ChEBI" id="CHEBI:87089"/>
        <dbReference type="ChEBI" id="CHEBI:456216"/>
        <dbReference type="EC" id="2.4.1.213"/>
    </reaction>
</comment>
<comment type="pathway">
    <text>Glycan metabolism; glucosylglycerol biosynthesis.</text>
</comment>
<comment type="induction">
    <text>By salt shock.</text>
</comment>
<comment type="similarity">
    <text evidence="2">Belongs to the glycosyltransferase 20 family.</text>
</comment>
<protein>
    <recommendedName>
        <fullName>Glucosylglycerol-phosphate synthase</fullName>
        <ecNumber>2.4.1.213</ecNumber>
    </recommendedName>
    <alternativeName>
        <fullName>Glucosyl-glycerol-phosphate synthase</fullName>
        <shortName>GG-phosphate synthase</shortName>
        <shortName>GGPS</shortName>
    </alternativeName>
</protein>
<keyword id="KW-0328">Glycosyltransferase</keyword>
<keyword id="KW-1185">Reference proteome</keyword>
<keyword id="KW-0346">Stress response</keyword>
<keyword id="KW-0808">Transferase</keyword>
<feature type="chain" id="PRO_0000122505" description="Glucosylglycerol-phosphate synthase">
    <location>
        <begin position="1"/>
        <end position="500"/>
    </location>
</feature>
<feature type="sequence conflict" description="In Ref. 1; CAA06963." evidence="2" ref="1">
    <original>K</original>
    <variation>N</variation>
    <location>
        <position position="364"/>
    </location>
</feature>
<name>GGPS_PICP2</name>
<evidence type="ECO:0000250" key="1">
    <source>
        <dbReference type="UniProtKB" id="P74258"/>
    </source>
</evidence>
<evidence type="ECO:0000305" key="2"/>